<feature type="transit peptide" description="Mitochondrion" evidence="4">
    <location>
        <begin position="1"/>
        <end position="25"/>
    </location>
</feature>
<feature type="chain" id="PRO_0000000506" description="Medium-chain specific acyl-CoA dehydrogenase, mitochondrial">
    <location>
        <begin position="26"/>
        <end position="421"/>
    </location>
</feature>
<feature type="active site" description="Proton acceptor" evidence="2">
    <location>
        <position position="401"/>
    </location>
</feature>
<feature type="binding site" description="in other chain" evidence="2">
    <location>
        <begin position="158"/>
        <end position="167"/>
    </location>
    <ligand>
        <name>FAD</name>
        <dbReference type="ChEBI" id="CHEBI:57692"/>
        <note>ligand shared between dimeric partners</note>
    </ligand>
</feature>
<feature type="binding site" evidence="2">
    <location>
        <position position="167"/>
    </location>
    <ligand>
        <name>octanoyl-CoA</name>
        <dbReference type="ChEBI" id="CHEBI:57386"/>
    </ligand>
</feature>
<feature type="binding site" description="in other chain" evidence="2">
    <location>
        <begin position="191"/>
        <end position="193"/>
    </location>
    <ligand>
        <name>FAD</name>
        <dbReference type="ChEBI" id="CHEBI:57692"/>
        <note>ligand shared between dimeric partners</note>
    </ligand>
</feature>
<feature type="binding site" evidence="2">
    <location>
        <position position="216"/>
    </location>
    <ligand>
        <name>octanoyl-CoA</name>
        <dbReference type="ChEBI" id="CHEBI:57386"/>
    </ligand>
</feature>
<feature type="binding site" evidence="2">
    <location>
        <position position="278"/>
    </location>
    <ligand>
        <name>octanoyl-CoA</name>
        <dbReference type="ChEBI" id="CHEBI:57386"/>
    </ligand>
</feature>
<feature type="binding site" evidence="2">
    <location>
        <position position="281"/>
    </location>
    <ligand>
        <name>octanoyl-CoA</name>
        <dbReference type="ChEBI" id="CHEBI:57386"/>
    </ligand>
</feature>
<feature type="binding site" evidence="2">
    <location>
        <begin position="306"/>
        <end position="308"/>
    </location>
    <ligand>
        <name>FAD</name>
        <dbReference type="ChEBI" id="CHEBI:57692"/>
        <note>ligand shared between dimeric partners</note>
    </ligand>
</feature>
<feature type="binding site" description="in other chain" evidence="2">
    <location>
        <begin position="316"/>
        <end position="317"/>
    </location>
    <ligand>
        <name>FAD</name>
        <dbReference type="ChEBI" id="CHEBI:57692"/>
        <note>ligand shared between dimeric partners</note>
    </ligand>
</feature>
<feature type="binding site" evidence="2">
    <location>
        <position position="349"/>
    </location>
    <ligand>
        <name>octanoyl-CoA</name>
        <dbReference type="ChEBI" id="CHEBI:57386"/>
    </ligand>
</feature>
<feature type="binding site" evidence="2">
    <location>
        <position position="351"/>
    </location>
    <ligand>
        <name>octanoyl-CoA</name>
        <dbReference type="ChEBI" id="CHEBI:57386"/>
    </ligand>
</feature>
<feature type="binding site" evidence="2">
    <location>
        <begin position="374"/>
        <end position="378"/>
    </location>
    <ligand>
        <name>FAD</name>
        <dbReference type="ChEBI" id="CHEBI:57692"/>
        <note>ligand shared between dimeric partners</note>
    </ligand>
</feature>
<feature type="binding site" evidence="2">
    <location>
        <position position="401"/>
    </location>
    <ligand>
        <name>octanoyl-CoA</name>
        <dbReference type="ChEBI" id="CHEBI:57386"/>
    </ligand>
</feature>
<feature type="binding site" description="in other chain" evidence="2">
    <location>
        <begin position="402"/>
        <end position="405"/>
    </location>
    <ligand>
        <name>FAD</name>
        <dbReference type="ChEBI" id="CHEBI:57692"/>
        <note>ligand shared between dimeric partners</note>
    </ligand>
</feature>
<feature type="modified residue" description="N6-acetyllysine; alternate" evidence="3">
    <location>
        <position position="69"/>
    </location>
</feature>
<feature type="modified residue" description="N6-succinyllysine; alternate" evidence="3">
    <location>
        <position position="69"/>
    </location>
</feature>
<feature type="modified residue" description="N6-acetyllysine" evidence="3">
    <location>
        <position position="79"/>
    </location>
</feature>
<feature type="modified residue" description="N6-succinyllysine" evidence="3">
    <location>
        <position position="179"/>
    </location>
</feature>
<feature type="modified residue" description="N6-acetyllysine; alternate" evidence="3">
    <location>
        <position position="212"/>
    </location>
</feature>
<feature type="modified residue" description="N6-succinyllysine; alternate" evidence="3">
    <location>
        <position position="212"/>
    </location>
</feature>
<feature type="modified residue" description="N6-acetyllysine; alternate" evidence="3">
    <location>
        <position position="217"/>
    </location>
</feature>
<feature type="modified residue" description="N6-succinyllysine; alternate" evidence="3">
    <location>
        <position position="217"/>
    </location>
</feature>
<feature type="modified residue" description="N6-acetyllysine; alternate" evidence="3">
    <location>
        <position position="259"/>
    </location>
</feature>
<feature type="modified residue" description="N6-succinyllysine; alternate" evidence="3">
    <location>
        <position position="259"/>
    </location>
</feature>
<feature type="modified residue" description="N6-acetyllysine; alternate" evidence="3">
    <location>
        <position position="271"/>
    </location>
</feature>
<feature type="modified residue" description="N6-succinyllysine; alternate" evidence="3">
    <location>
        <position position="271"/>
    </location>
</feature>
<feature type="modified residue" description="N6-acetyllysine" evidence="1">
    <location>
        <position position="301"/>
    </location>
</feature>
<feature type="modified residue" description="Phosphothreonine" evidence="3">
    <location>
        <position position="351"/>
    </location>
</feature>
<accession>P08503</accession>
<keyword id="KW-0007">Acetylation</keyword>
<keyword id="KW-0903">Direct protein sequencing</keyword>
<keyword id="KW-0274">FAD</keyword>
<keyword id="KW-0276">Fatty acid metabolism</keyword>
<keyword id="KW-0285">Flavoprotein</keyword>
<keyword id="KW-0443">Lipid metabolism</keyword>
<keyword id="KW-0496">Mitochondrion</keyword>
<keyword id="KW-0560">Oxidoreductase</keyword>
<keyword id="KW-0597">Phosphoprotein</keyword>
<keyword id="KW-1185">Reference proteome</keyword>
<keyword id="KW-0809">Transit peptide</keyword>
<organism>
    <name type="scientific">Rattus norvegicus</name>
    <name type="common">Rat</name>
    <dbReference type="NCBI Taxonomy" id="10116"/>
    <lineage>
        <taxon>Eukaryota</taxon>
        <taxon>Metazoa</taxon>
        <taxon>Chordata</taxon>
        <taxon>Craniata</taxon>
        <taxon>Vertebrata</taxon>
        <taxon>Euteleostomi</taxon>
        <taxon>Mammalia</taxon>
        <taxon>Eutheria</taxon>
        <taxon>Euarchontoglires</taxon>
        <taxon>Glires</taxon>
        <taxon>Rodentia</taxon>
        <taxon>Myomorpha</taxon>
        <taxon>Muroidea</taxon>
        <taxon>Muridae</taxon>
        <taxon>Murinae</taxon>
        <taxon>Rattus</taxon>
    </lineage>
</organism>
<comment type="function">
    <text evidence="1 6">Medium-chain specific acyl-CoA dehydrogenase is one of the acyl-CoA dehydrogenases that catalyze the first step of mitochondrial fatty acid beta-oxidation, an aerobic process breaking down fatty acids into acetyl-CoA and allowing the production of energy from fats (PubMed:3968063). The first step of fatty acid beta-oxidation consists in the removal of one hydrogen from C-2 and C-3 of the straight-chain fatty acyl-CoA thioester, resulting in the formation of trans-2-enoyl-CoA (PubMed:3968063). Electron transfer flavoprotein (ETF) is the electron acceptor that transfers electrons to the main mitochondrial respiratory chain via ETF-ubiquinone oxidoreductase (ETF dehydrogenase) (By similarity). Among the different mitochondrial acyl-CoA dehydrogenases, medium-chain specific acyl-CoA dehydrogenase acts specifically on acyl-CoAs with saturated 6 to 12 carbons long primary chains (PubMed:3968063).</text>
</comment>
<comment type="catalytic activity">
    <reaction evidence="6">
        <text>a medium-chain 2,3-saturated fatty acyl-CoA + oxidized [electron-transfer flavoprotein] + H(+) = a medium-chain (2E)-enoyl-CoA + reduced [electron-transfer flavoprotein]</text>
        <dbReference type="Rhea" id="RHEA:14477"/>
        <dbReference type="Rhea" id="RHEA-COMP:10685"/>
        <dbReference type="Rhea" id="RHEA-COMP:10686"/>
        <dbReference type="ChEBI" id="CHEBI:15378"/>
        <dbReference type="ChEBI" id="CHEBI:57692"/>
        <dbReference type="ChEBI" id="CHEBI:58307"/>
        <dbReference type="ChEBI" id="CHEBI:83723"/>
        <dbReference type="ChEBI" id="CHEBI:83726"/>
        <dbReference type="EC" id="1.3.8.7"/>
    </reaction>
    <physiologicalReaction direction="left-to-right" evidence="10">
        <dbReference type="Rhea" id="RHEA:14478"/>
    </physiologicalReaction>
</comment>
<comment type="catalytic activity">
    <reaction evidence="6">
        <text>pentanoyl-CoA + oxidized [electron-transfer flavoprotein] + H(+) = (2E)-pentenoyl-CoA + reduced [electron-transfer flavoprotein]</text>
        <dbReference type="Rhea" id="RHEA:43456"/>
        <dbReference type="Rhea" id="RHEA-COMP:10685"/>
        <dbReference type="Rhea" id="RHEA-COMP:10686"/>
        <dbReference type="ChEBI" id="CHEBI:15378"/>
        <dbReference type="ChEBI" id="CHEBI:57389"/>
        <dbReference type="ChEBI" id="CHEBI:57692"/>
        <dbReference type="ChEBI" id="CHEBI:58307"/>
        <dbReference type="ChEBI" id="CHEBI:86160"/>
    </reaction>
    <physiologicalReaction direction="left-to-right" evidence="10">
        <dbReference type="Rhea" id="RHEA:43457"/>
    </physiologicalReaction>
</comment>
<comment type="catalytic activity">
    <reaction evidence="6">
        <text>hexanoyl-CoA + oxidized [electron-transfer flavoprotein] + H(+) = (2E)-hexenoyl-CoA + reduced [electron-transfer flavoprotein]</text>
        <dbReference type="Rhea" id="RHEA:43464"/>
        <dbReference type="Rhea" id="RHEA-COMP:10685"/>
        <dbReference type="Rhea" id="RHEA-COMP:10686"/>
        <dbReference type="ChEBI" id="CHEBI:15378"/>
        <dbReference type="ChEBI" id="CHEBI:57692"/>
        <dbReference type="ChEBI" id="CHEBI:58307"/>
        <dbReference type="ChEBI" id="CHEBI:62077"/>
        <dbReference type="ChEBI" id="CHEBI:62620"/>
    </reaction>
    <physiologicalReaction direction="left-to-right" evidence="10">
        <dbReference type="Rhea" id="RHEA:43465"/>
    </physiologicalReaction>
</comment>
<comment type="catalytic activity">
    <reaction evidence="6">
        <text>octanoyl-CoA + oxidized [electron-transfer flavoprotein] + H(+) = (2E)-octenoyl-CoA + reduced [electron-transfer flavoprotein]</text>
        <dbReference type="Rhea" id="RHEA:48180"/>
        <dbReference type="Rhea" id="RHEA-COMP:10685"/>
        <dbReference type="Rhea" id="RHEA-COMP:10686"/>
        <dbReference type="ChEBI" id="CHEBI:15378"/>
        <dbReference type="ChEBI" id="CHEBI:57386"/>
        <dbReference type="ChEBI" id="CHEBI:57692"/>
        <dbReference type="ChEBI" id="CHEBI:58307"/>
        <dbReference type="ChEBI" id="CHEBI:62242"/>
    </reaction>
    <physiologicalReaction direction="left-to-right" evidence="10">
        <dbReference type="Rhea" id="RHEA:48181"/>
    </physiologicalReaction>
</comment>
<comment type="catalytic activity">
    <reaction evidence="6">
        <text>decanoyl-CoA + oxidized [electron-transfer flavoprotein] + H(+) = (2E)-decenoyl-CoA + reduced [electron-transfer flavoprotein]</text>
        <dbReference type="Rhea" id="RHEA:48176"/>
        <dbReference type="Rhea" id="RHEA-COMP:10685"/>
        <dbReference type="Rhea" id="RHEA-COMP:10686"/>
        <dbReference type="ChEBI" id="CHEBI:15378"/>
        <dbReference type="ChEBI" id="CHEBI:57692"/>
        <dbReference type="ChEBI" id="CHEBI:58307"/>
        <dbReference type="ChEBI" id="CHEBI:61406"/>
        <dbReference type="ChEBI" id="CHEBI:61430"/>
    </reaction>
    <physiologicalReaction direction="left-to-right" evidence="10">
        <dbReference type="Rhea" id="RHEA:48177"/>
    </physiologicalReaction>
</comment>
<comment type="catalytic activity">
    <reaction evidence="6">
        <text>dodecanoyl-CoA + oxidized [electron-transfer flavoprotein] + H(+) = (2E)-dodecenoyl-CoA + reduced [electron-transfer flavoprotein]</text>
        <dbReference type="Rhea" id="RHEA:47296"/>
        <dbReference type="Rhea" id="RHEA-COMP:10685"/>
        <dbReference type="Rhea" id="RHEA-COMP:10686"/>
        <dbReference type="ChEBI" id="CHEBI:15378"/>
        <dbReference type="ChEBI" id="CHEBI:57330"/>
        <dbReference type="ChEBI" id="CHEBI:57375"/>
        <dbReference type="ChEBI" id="CHEBI:57692"/>
        <dbReference type="ChEBI" id="CHEBI:58307"/>
    </reaction>
    <physiologicalReaction direction="left-to-right" evidence="10">
        <dbReference type="Rhea" id="RHEA:47297"/>
    </physiologicalReaction>
</comment>
<comment type="catalytic activity">
    <reaction evidence="1">
        <text>tetradecanoyl-CoA + oxidized [electron-transfer flavoprotein] + H(+) = (2E)-tetradecenoyl-CoA + reduced [electron-transfer flavoprotein]</text>
        <dbReference type="Rhea" id="RHEA:47316"/>
        <dbReference type="Rhea" id="RHEA-COMP:10685"/>
        <dbReference type="Rhea" id="RHEA-COMP:10686"/>
        <dbReference type="ChEBI" id="CHEBI:15378"/>
        <dbReference type="ChEBI" id="CHEBI:57385"/>
        <dbReference type="ChEBI" id="CHEBI:57692"/>
        <dbReference type="ChEBI" id="CHEBI:58307"/>
        <dbReference type="ChEBI" id="CHEBI:61405"/>
    </reaction>
    <physiologicalReaction direction="left-to-right" evidence="1">
        <dbReference type="Rhea" id="RHEA:47317"/>
    </physiologicalReaction>
</comment>
<comment type="catalytic activity">
    <reaction evidence="1">
        <text>oxidized [electron-transfer flavoprotein] + hexadecanoyl-CoA + H(+) = (2E)-hexadecenoyl-CoA + reduced [electron-transfer flavoprotein]</text>
        <dbReference type="Rhea" id="RHEA:43448"/>
        <dbReference type="Rhea" id="RHEA-COMP:10685"/>
        <dbReference type="Rhea" id="RHEA-COMP:10686"/>
        <dbReference type="ChEBI" id="CHEBI:15378"/>
        <dbReference type="ChEBI" id="CHEBI:57379"/>
        <dbReference type="ChEBI" id="CHEBI:57692"/>
        <dbReference type="ChEBI" id="CHEBI:58307"/>
        <dbReference type="ChEBI" id="CHEBI:61526"/>
    </reaction>
    <physiologicalReaction direction="left-to-right" evidence="1">
        <dbReference type="Rhea" id="RHEA:43449"/>
    </physiologicalReaction>
</comment>
<comment type="cofactor">
    <cofactor evidence="6">
        <name>FAD</name>
        <dbReference type="ChEBI" id="CHEBI:57692"/>
    </cofactor>
</comment>
<comment type="biophysicochemical properties">
    <kinetics>
        <KM evidence="6">135 uM for butanoyl-CoA</KM>
        <KM evidence="6">39.6 uM for pentanoyl-CoA</KM>
        <KM evidence="6">9.4 uM for hexanoyl-CoA</KM>
        <KM evidence="6">4 uM for octanoyl-CoA</KM>
        <KM evidence="6">5.4 uM for decanoyl-CoA</KM>
        <KM evidence="6">5.7 uM for dodecanoyl-CoA</KM>
    </kinetics>
</comment>
<comment type="pathway">
    <text evidence="10">Lipid metabolism; mitochondrial fatty acid beta-oxidation.</text>
</comment>
<comment type="subunit">
    <text evidence="1 5 6">Homotetramer (PubMed:3813556, PubMed:3968063). Interacts with the heterodimeric electron transfer flavoprotein ETF (By similarity).</text>
</comment>
<comment type="subcellular location">
    <subcellularLocation>
        <location evidence="5 6">Mitochondrion matrix</location>
    </subcellularLocation>
</comment>
<comment type="PTM">
    <text evidence="1">Acetylated. Could occur at proximity of the cofactor-binding sites and reduce the catalytic activity. Could be deacetylated by SIRT3.</text>
</comment>
<comment type="similarity">
    <text evidence="8">Belongs to the acyl-CoA dehydrogenase family.</text>
</comment>
<proteinExistence type="evidence at protein level"/>
<dbReference type="EC" id="1.3.8.7" evidence="6"/>
<dbReference type="EMBL" id="J02791">
    <property type="protein sequence ID" value="AAA40670.1"/>
    <property type="molecule type" value="mRNA"/>
</dbReference>
<dbReference type="PIR" id="A28436">
    <property type="entry name" value="DERTCM"/>
</dbReference>
<dbReference type="RefSeq" id="NP_058682.2">
    <property type="nucleotide sequence ID" value="NM_016986.2"/>
</dbReference>
<dbReference type="SMR" id="P08503"/>
<dbReference type="BioGRID" id="246350">
    <property type="interactions" value="1"/>
</dbReference>
<dbReference type="FunCoup" id="P08503">
    <property type="interactions" value="1263"/>
</dbReference>
<dbReference type="IntAct" id="P08503">
    <property type="interactions" value="1"/>
</dbReference>
<dbReference type="STRING" id="10116.ENSRNOP00000013238"/>
<dbReference type="ChEMBL" id="CHEMBL2176828"/>
<dbReference type="GlyGen" id="P08503">
    <property type="glycosylation" value="1 site, 1 O-linked glycan (1 site)"/>
</dbReference>
<dbReference type="iPTMnet" id="P08503"/>
<dbReference type="PhosphoSitePlus" id="P08503"/>
<dbReference type="jPOST" id="P08503"/>
<dbReference type="PaxDb" id="10116-ENSRNOP00000013238"/>
<dbReference type="GeneID" id="24158"/>
<dbReference type="KEGG" id="rno:24158"/>
<dbReference type="AGR" id="RGD:2012"/>
<dbReference type="CTD" id="34"/>
<dbReference type="RGD" id="2012">
    <property type="gene designation" value="Acadm"/>
</dbReference>
<dbReference type="eggNOG" id="KOG0140">
    <property type="taxonomic scope" value="Eukaryota"/>
</dbReference>
<dbReference type="InParanoid" id="P08503"/>
<dbReference type="OrthoDB" id="434771at2759"/>
<dbReference type="PhylomeDB" id="P08503"/>
<dbReference type="Reactome" id="R-RNO-77288">
    <property type="pathway name" value="mitochondrial fatty acid beta-oxidation of unsaturated fatty acids"/>
</dbReference>
<dbReference type="Reactome" id="R-RNO-77346">
    <property type="pathway name" value="Beta oxidation of decanoyl-CoA to octanoyl-CoA-CoA"/>
</dbReference>
<dbReference type="Reactome" id="R-RNO-77348">
    <property type="pathway name" value="Beta oxidation of octanoyl-CoA to hexanoyl-CoA"/>
</dbReference>
<dbReference type="SABIO-RK" id="P08503"/>
<dbReference type="UniPathway" id="UPA00660"/>
<dbReference type="PRO" id="PR:P08503"/>
<dbReference type="Proteomes" id="UP000002494">
    <property type="component" value="Unplaced"/>
</dbReference>
<dbReference type="GO" id="GO:0030424">
    <property type="term" value="C:axon"/>
    <property type="evidence" value="ECO:0000266"/>
    <property type="project" value="RGD"/>
</dbReference>
<dbReference type="GO" id="GO:0005737">
    <property type="term" value="C:cytoplasm"/>
    <property type="evidence" value="ECO:0000318"/>
    <property type="project" value="GO_Central"/>
</dbReference>
<dbReference type="GO" id="GO:0005759">
    <property type="term" value="C:mitochondrial matrix"/>
    <property type="evidence" value="ECO:0000314"/>
    <property type="project" value="BHF-UCL"/>
</dbReference>
<dbReference type="GO" id="GO:0031966">
    <property type="term" value="C:mitochondrial membrane"/>
    <property type="evidence" value="ECO:0000314"/>
    <property type="project" value="BHF-UCL"/>
</dbReference>
<dbReference type="GO" id="GO:0005739">
    <property type="term" value="C:mitochondrion"/>
    <property type="evidence" value="ECO:0000266"/>
    <property type="project" value="RGD"/>
</dbReference>
<dbReference type="GO" id="GO:0003995">
    <property type="term" value="F:acyl-CoA dehydrogenase activity"/>
    <property type="evidence" value="ECO:0000314"/>
    <property type="project" value="RGD"/>
</dbReference>
<dbReference type="GO" id="GO:0050660">
    <property type="term" value="F:flavin adenine dinucleotide binding"/>
    <property type="evidence" value="ECO:0000314"/>
    <property type="project" value="RGD"/>
</dbReference>
<dbReference type="GO" id="GO:0042802">
    <property type="term" value="F:identical protein binding"/>
    <property type="evidence" value="ECO:0000314"/>
    <property type="project" value="BHF-UCL"/>
</dbReference>
<dbReference type="GO" id="GO:0016853">
    <property type="term" value="F:isomerase activity"/>
    <property type="evidence" value="ECO:0000314"/>
    <property type="project" value="RGD"/>
</dbReference>
<dbReference type="GO" id="GO:0070991">
    <property type="term" value="F:medium-chain fatty acyl-CoA dehydrogenase activity"/>
    <property type="evidence" value="ECO:0000266"/>
    <property type="project" value="RGD"/>
</dbReference>
<dbReference type="GO" id="GO:0042803">
    <property type="term" value="F:protein homodimerization activity"/>
    <property type="evidence" value="ECO:0000353"/>
    <property type="project" value="RGD"/>
</dbReference>
<dbReference type="GO" id="GO:0055007">
    <property type="term" value="P:cardiac muscle cell differentiation"/>
    <property type="evidence" value="ECO:0000266"/>
    <property type="project" value="RGD"/>
</dbReference>
<dbReference type="GO" id="GO:0045329">
    <property type="term" value="P:carnitine biosynthetic process"/>
    <property type="evidence" value="ECO:0000266"/>
    <property type="project" value="RGD"/>
</dbReference>
<dbReference type="GO" id="GO:0009437">
    <property type="term" value="P:carnitine metabolic process"/>
    <property type="evidence" value="ECO:0000266"/>
    <property type="project" value="RGD"/>
</dbReference>
<dbReference type="GO" id="GO:0019254">
    <property type="term" value="P:carnitine metabolic process, CoA-linked"/>
    <property type="evidence" value="ECO:0000266"/>
    <property type="project" value="RGD"/>
</dbReference>
<dbReference type="GO" id="GO:0006635">
    <property type="term" value="P:fatty acid beta-oxidation"/>
    <property type="evidence" value="ECO:0000250"/>
    <property type="project" value="UniProtKB"/>
</dbReference>
<dbReference type="GO" id="GO:0033539">
    <property type="term" value="P:fatty acid beta-oxidation using acyl-CoA dehydrogenase"/>
    <property type="evidence" value="ECO:0000314"/>
    <property type="project" value="RGD"/>
</dbReference>
<dbReference type="GO" id="GO:0005978">
    <property type="term" value="P:glycogen biosynthetic process"/>
    <property type="evidence" value="ECO:0000266"/>
    <property type="project" value="RGD"/>
</dbReference>
<dbReference type="GO" id="GO:0007507">
    <property type="term" value="P:heart development"/>
    <property type="evidence" value="ECO:0000266"/>
    <property type="project" value="RGD"/>
</dbReference>
<dbReference type="GO" id="GO:0001889">
    <property type="term" value="P:liver development"/>
    <property type="evidence" value="ECO:0000266"/>
    <property type="project" value="RGD"/>
</dbReference>
<dbReference type="GO" id="GO:0051793">
    <property type="term" value="P:medium-chain fatty acid catabolic process"/>
    <property type="evidence" value="ECO:0000314"/>
    <property type="project" value="RGD"/>
</dbReference>
<dbReference type="GO" id="GO:0051791">
    <property type="term" value="P:medium-chain fatty acid metabolic process"/>
    <property type="evidence" value="ECO:0000266"/>
    <property type="project" value="RGD"/>
</dbReference>
<dbReference type="GO" id="GO:0006082">
    <property type="term" value="P:organic acid metabolic process"/>
    <property type="evidence" value="ECO:0000266"/>
    <property type="project" value="RGD"/>
</dbReference>
<dbReference type="GO" id="GO:0009791">
    <property type="term" value="P:post-embryonic development"/>
    <property type="evidence" value="ECO:0000266"/>
    <property type="project" value="RGD"/>
</dbReference>
<dbReference type="GO" id="GO:0006111">
    <property type="term" value="P:regulation of gluconeogenesis"/>
    <property type="evidence" value="ECO:0000266"/>
    <property type="project" value="RGD"/>
</dbReference>
<dbReference type="GO" id="GO:0009409">
    <property type="term" value="P:response to cold"/>
    <property type="evidence" value="ECO:0000266"/>
    <property type="project" value="RGD"/>
</dbReference>
<dbReference type="GO" id="GO:0046688">
    <property type="term" value="P:response to copper ion"/>
    <property type="evidence" value="ECO:0000270"/>
    <property type="project" value="RGD"/>
</dbReference>
<dbReference type="GO" id="GO:0051384">
    <property type="term" value="P:response to glucocorticoid"/>
    <property type="evidence" value="ECO:0000270"/>
    <property type="project" value="RGD"/>
</dbReference>
<dbReference type="GO" id="GO:0009725">
    <property type="term" value="P:response to hormone"/>
    <property type="evidence" value="ECO:0000270"/>
    <property type="project" value="RGD"/>
</dbReference>
<dbReference type="GO" id="GO:0007584">
    <property type="term" value="P:response to nutrient"/>
    <property type="evidence" value="ECO:0000270"/>
    <property type="project" value="RGD"/>
</dbReference>
<dbReference type="GO" id="GO:0042594">
    <property type="term" value="P:response to starvation"/>
    <property type="evidence" value="ECO:0000266"/>
    <property type="project" value="RGD"/>
</dbReference>
<dbReference type="GO" id="GO:0009410">
    <property type="term" value="P:response to xenobiotic stimulus"/>
    <property type="evidence" value="ECO:0000270"/>
    <property type="project" value="RGD"/>
</dbReference>
<dbReference type="CDD" id="cd01157">
    <property type="entry name" value="MCAD"/>
    <property type="match status" value="1"/>
</dbReference>
<dbReference type="FunFam" id="1.10.540.10:FF:000010">
    <property type="entry name" value="Medium-chain specific acyl-CoA dehydrogenase, mitochondrial"/>
    <property type="match status" value="1"/>
</dbReference>
<dbReference type="FunFam" id="1.20.140.10:FF:000011">
    <property type="entry name" value="Medium-chain specific acyl-CoA dehydrogenase, mitochondrial"/>
    <property type="match status" value="1"/>
</dbReference>
<dbReference type="FunFam" id="2.40.110.10:FF:000007">
    <property type="entry name" value="Medium-chain specific acyl-CoA dehydrogenase, mitochondrial"/>
    <property type="match status" value="1"/>
</dbReference>
<dbReference type="Gene3D" id="1.10.540.10">
    <property type="entry name" value="Acyl-CoA dehydrogenase/oxidase, N-terminal domain"/>
    <property type="match status" value="1"/>
</dbReference>
<dbReference type="Gene3D" id="2.40.110.10">
    <property type="entry name" value="Butyryl-CoA Dehydrogenase, subunit A, domain 2"/>
    <property type="match status" value="1"/>
</dbReference>
<dbReference type="Gene3D" id="1.20.140.10">
    <property type="entry name" value="Butyryl-CoA Dehydrogenase, subunit A, domain 3"/>
    <property type="match status" value="1"/>
</dbReference>
<dbReference type="InterPro" id="IPR050741">
    <property type="entry name" value="Acyl-CoA_dehydrogenase"/>
</dbReference>
<dbReference type="InterPro" id="IPR006089">
    <property type="entry name" value="Acyl-CoA_DH_CS"/>
</dbReference>
<dbReference type="InterPro" id="IPR006091">
    <property type="entry name" value="Acyl-CoA_Oxase/DH_mid-dom"/>
</dbReference>
<dbReference type="InterPro" id="IPR046373">
    <property type="entry name" value="Acyl-CoA_Oxase/DH_mid-dom_sf"/>
</dbReference>
<dbReference type="InterPro" id="IPR036250">
    <property type="entry name" value="AcylCo_DH-like_C"/>
</dbReference>
<dbReference type="InterPro" id="IPR009075">
    <property type="entry name" value="AcylCo_DH/oxidase_C"/>
</dbReference>
<dbReference type="InterPro" id="IPR013786">
    <property type="entry name" value="AcylCoA_DH/ox_N"/>
</dbReference>
<dbReference type="InterPro" id="IPR037069">
    <property type="entry name" value="AcylCoA_DH/ox_N_sf"/>
</dbReference>
<dbReference type="InterPro" id="IPR009100">
    <property type="entry name" value="AcylCoA_DH/oxidase_NM_dom_sf"/>
</dbReference>
<dbReference type="InterPro" id="IPR034180">
    <property type="entry name" value="MCAD"/>
</dbReference>
<dbReference type="PANTHER" id="PTHR48083:SF2">
    <property type="entry name" value="MEDIUM-CHAIN SPECIFIC ACYL-COA DEHYDROGENASE, MITOCHONDRIAL"/>
    <property type="match status" value="1"/>
</dbReference>
<dbReference type="PANTHER" id="PTHR48083">
    <property type="entry name" value="MEDIUM-CHAIN SPECIFIC ACYL-COA DEHYDROGENASE, MITOCHONDRIAL-RELATED"/>
    <property type="match status" value="1"/>
</dbReference>
<dbReference type="Pfam" id="PF00441">
    <property type="entry name" value="Acyl-CoA_dh_1"/>
    <property type="match status" value="1"/>
</dbReference>
<dbReference type="Pfam" id="PF02770">
    <property type="entry name" value="Acyl-CoA_dh_M"/>
    <property type="match status" value="1"/>
</dbReference>
<dbReference type="Pfam" id="PF02771">
    <property type="entry name" value="Acyl-CoA_dh_N"/>
    <property type="match status" value="1"/>
</dbReference>
<dbReference type="SUPFAM" id="SSF47203">
    <property type="entry name" value="Acyl-CoA dehydrogenase C-terminal domain-like"/>
    <property type="match status" value="1"/>
</dbReference>
<dbReference type="SUPFAM" id="SSF56645">
    <property type="entry name" value="Acyl-CoA dehydrogenase NM domain-like"/>
    <property type="match status" value="1"/>
</dbReference>
<dbReference type="PROSITE" id="PS00072">
    <property type="entry name" value="ACYL_COA_DH_1"/>
    <property type="match status" value="1"/>
</dbReference>
<dbReference type="PROSITE" id="PS00073">
    <property type="entry name" value="ACYL_COA_DH_2"/>
    <property type="match status" value="1"/>
</dbReference>
<protein>
    <recommendedName>
        <fullName evidence="9">Medium-chain specific acyl-CoA dehydrogenase, mitochondrial</fullName>
        <shortName evidence="7">MCAD</shortName>
        <ecNumber evidence="6">1.3.8.7</ecNumber>
    </recommendedName>
</protein>
<sequence>MAAALRRGYKVLRSVSHFECRAQHTKPSLKQEPGLGFSFELTEQQKEFQTIARKFAREEIIPVAPDYDKSGEYPFPLIKRAWELGLINTHIPESCGGLGLGTFDACLITEELAYGCTGVQTAIEANSLGQMPVIIAGNDQQKKKYLGRMTEQPMMCAYCVTEPSAGSDVAGIKTKAEKKGDEYVINGQKMWITNGGKANWYFVLTRSNPDPKVPASKAFTGFIVEADTPGIHIGKKELNMGQRCSDTRGITFEDVRVPKENVLIGEGAGFKIAMGAFDRTRPTVAAGAVGLAQRALDEATKYALDRKTFGKLLVEHQGVSFLLAEMAMKVELARLSYQRAAWEVDSGRRNTYFASIAKAFAGDIANQLATDAVQIFGGYGFNTEYPVEKLMRDAKIYQIYEGTAQIQRLIIAREHIEKYKN</sequence>
<evidence type="ECO:0000250" key="1">
    <source>
        <dbReference type="UniProtKB" id="P11310"/>
    </source>
</evidence>
<evidence type="ECO:0000250" key="2">
    <source>
        <dbReference type="UniProtKB" id="P41367"/>
    </source>
</evidence>
<evidence type="ECO:0000250" key="3">
    <source>
        <dbReference type="UniProtKB" id="P45952"/>
    </source>
</evidence>
<evidence type="ECO:0000269" key="4">
    <source>
    </source>
</evidence>
<evidence type="ECO:0000269" key="5">
    <source>
    </source>
</evidence>
<evidence type="ECO:0000269" key="6">
    <source>
    </source>
</evidence>
<evidence type="ECO:0000303" key="7">
    <source>
    </source>
</evidence>
<evidence type="ECO:0000305" key="8"/>
<evidence type="ECO:0000305" key="9">
    <source>
    </source>
</evidence>
<evidence type="ECO:0000305" key="10">
    <source>
    </source>
</evidence>
<evidence type="ECO:0000312" key="11">
    <source>
        <dbReference type="RGD" id="2012"/>
    </source>
</evidence>
<gene>
    <name evidence="11" type="primary">Acadm</name>
</gene>
<name>ACADM_RAT</name>
<reference key="1">
    <citation type="journal article" date="1987" name="J. Biol. Chem.">
        <title>Molecular cloning and nucleotide sequence of cDNA encoding the entire precursor of rat liver medium chain acyl coenzyme A dehydrogenase.</title>
        <authorList>
            <person name="Matsubara Y."/>
            <person name="Kraus J.P."/>
            <person name="Ozasa H."/>
            <person name="Glassberg R."/>
            <person name="Finocchiaro G."/>
            <person name="Ikeda Y."/>
            <person name="Mole J."/>
            <person name="Rosenberg L.E."/>
            <person name="Tanaka K."/>
        </authorList>
    </citation>
    <scope>NUCLEOTIDE SEQUENCE [MRNA]</scope>
    <scope>PARTIAL PROTEIN SEQUENCE</scope>
    <scope>TRANSIT PEPTIDE</scope>
    <source>
        <tissue>Liver</tissue>
    </source>
</reference>
<reference key="2">
    <citation type="journal article" date="1991" name="Biochim. Biophys. Acta">
        <title>Structurally different rat liver medium-chain acyl CoA dehydrogenases directed by complementary DNAs differing in their 5'-region.</title>
        <authorList>
            <person name="Inagaki T."/>
            <person name="Ohishi N."/>
            <person name="Tsukagoshi N."/>
            <person name="Udaka S."/>
            <person name="Ghisla S."/>
            <person name="Yagi K."/>
        </authorList>
    </citation>
    <scope>PROTEIN SEQUENCE OF 11-81</scope>
</reference>
<reference key="3">
    <citation type="journal article" date="1985" name="J. Biol. Chem.">
        <title>Purification and characterization of short-chain, medium-chain, and long-chain acyl-CoA dehydrogenases from rat liver mitochondria. Isolation of the holo- and apoenzymes and conversion of the apoenzyme to the holoenzyme.</title>
        <authorList>
            <person name="Ikeda Y."/>
            <person name="Okamura-Ikeda K."/>
            <person name="Tanaka K."/>
        </authorList>
    </citation>
    <scope>FUNCTION</scope>
    <scope>CATALYTIC ACTIVITY</scope>
    <scope>COFACTOR</scope>
    <scope>BIOPHYSICOCHEMICAL PROPERTIES</scope>
    <scope>SUBSTRATE SPECIFICITY</scope>
    <scope>PATHWAY</scope>
    <scope>SUBUNIT</scope>
    <scope>SUBCELLULAR LOCATION</scope>
</reference>
<reference key="4">
    <citation type="journal article" date="1987" name="Arch. Biochem. Biophys.">
        <title>Biosynthesis of four rat liver mitochondrial acyl-CoA dehydrogenases: in vitro synthesis, import into mitochondria, and processing of their precursors in a cell-free system and in cultured cells.</title>
        <authorList>
            <person name="Ikeda Y."/>
            <person name="Keese S.M."/>
            <person name="Fenton W.A."/>
            <person name="Tanaka K."/>
        </authorList>
    </citation>
    <scope>SUBUNIT</scope>
    <scope>SUBCELLULAR LOCATION</scope>
</reference>